<sequence length="587" mass="67929">MAINLFKVSNFYTMRSYVSPHVPVPNVNLQSVSCSAKAELPHLRPVIKRRSANYPPTIWTYNFVQSLNNHNADVLYKEKARKLEEEVRRLINNESQEMLTTLELIDGIQRLGLAYLFEKDIKGALDRFVSMGGCHVLPRKSLHAIALSFRLLRQHGYEVYQDDFKDFMDQKGELLKCFKKDVQGILSFYEASFCNLEGEDLLEKAKTETKVYLNDLQRNSKSDTVESISHALELPLCRRMVMLEARWYIEAYNKREDSNYTLLELAKLNFNMAQSILQRDLKDMSRWWNNLGLANKLSFSRDRLMECFFWTIGMAFEPQFSSCRKGLTKVTSLITTIDDVYDVYGTLDELEVFTDAVERWDVNAVRDLPNCMQLSFLALYNTINEMAYETLKEQGEHIIPYLTKAWADLCKAFLQEARWSHSKCIPSFDDYVENGWRSASGNVILVHAYFLLGHNSKQALDSLLNYHDILRWPSVVFRLCNDLATSSDELNRGETANSISCYMFENRVSEEQAREQINKLIDKAWTKMNEYHIGATHFGEPFIEAAINVARIPQCIYRHGDDHGAPDSRSKERVWSLIIESISLVDS</sequence>
<comment type="function">
    <text evidence="1">Probable sesquiterpene synthase.</text>
</comment>
<comment type="cofactor">
    <cofactor evidence="1">
        <name>Mg(2+)</name>
        <dbReference type="ChEBI" id="CHEBI:18420"/>
    </cofactor>
    <text evidence="1">Binds 3 Mg(2+) ions per subunit.</text>
</comment>
<comment type="domain">
    <text evidence="1">The Asp-Asp-Xaa-Xaa-Asp/Glu (DDXXD/E) motif is important for the catalytic activity, presumably through binding to Mg(2+).</text>
</comment>
<comment type="miscellaneous">
    <text evidence="3">Does not produce any detectable product when tested in vitro.</text>
</comment>
<comment type="similarity">
    <text evidence="2">Belongs to the terpene synthase family.</text>
</comment>
<evidence type="ECO:0000250" key="1"/>
<evidence type="ECO:0000305" key="2"/>
<evidence type="ECO:0000305" key="3">
    <source>
    </source>
</evidence>
<proteinExistence type="inferred from homology"/>
<name>TPS12_RICCO</name>
<keyword id="KW-0456">Lyase</keyword>
<keyword id="KW-0460">Magnesium</keyword>
<keyword id="KW-0479">Metal-binding</keyword>
<keyword id="KW-1185">Reference proteome</keyword>
<feature type="chain" id="PRO_0000422210" description="Probable terpene synthase 12">
    <location>
        <begin position="1"/>
        <end position="587"/>
    </location>
</feature>
<feature type="short sequence motif" description="DDXXD motif">
    <location>
        <begin position="338"/>
        <end position="342"/>
    </location>
</feature>
<feature type="binding site" evidence="1">
    <location>
        <position position="338"/>
    </location>
    <ligand>
        <name>Mg(2+)</name>
        <dbReference type="ChEBI" id="CHEBI:18420"/>
        <label>1</label>
    </ligand>
</feature>
<feature type="binding site" evidence="1">
    <location>
        <position position="338"/>
    </location>
    <ligand>
        <name>Mg(2+)</name>
        <dbReference type="ChEBI" id="CHEBI:18420"/>
        <label>2</label>
    </ligand>
</feature>
<feature type="binding site" evidence="1">
    <location>
        <position position="342"/>
    </location>
    <ligand>
        <name>Mg(2+)</name>
        <dbReference type="ChEBI" id="CHEBI:18420"/>
        <label>1</label>
    </ligand>
</feature>
<feature type="binding site" evidence="1">
    <location>
        <position position="342"/>
    </location>
    <ligand>
        <name>Mg(2+)</name>
        <dbReference type="ChEBI" id="CHEBI:18420"/>
        <label>2</label>
    </ligand>
</feature>
<feature type="binding site" evidence="1">
    <location>
        <position position="489"/>
    </location>
    <ligand>
        <name>Mg(2+)</name>
        <dbReference type="ChEBI" id="CHEBI:18420"/>
        <label>3</label>
    </ligand>
</feature>
<gene>
    <name type="primary">TPS12</name>
    <name type="ORF">RCOM_0058130</name>
</gene>
<dbReference type="EC" id="4.2.3.-"/>
<dbReference type="EMBL" id="EQ974896">
    <property type="protein sequence ID" value="EEF27987.1"/>
    <property type="molecule type" value="Genomic_DNA"/>
</dbReference>
<dbReference type="RefSeq" id="XP_002534394.1">
    <property type="nucleotide sequence ID" value="XM_002534348.1"/>
</dbReference>
<dbReference type="SMR" id="B9T825"/>
<dbReference type="STRING" id="3988.B9T825"/>
<dbReference type="GeneID" id="8260996"/>
<dbReference type="KEGG" id="rcu:8260996"/>
<dbReference type="eggNOG" id="ENOG502QUH3">
    <property type="taxonomic scope" value="Eukaryota"/>
</dbReference>
<dbReference type="InParanoid" id="B9T825"/>
<dbReference type="OrthoDB" id="1936865at2759"/>
<dbReference type="Proteomes" id="UP000008311">
    <property type="component" value="Unassembled WGS sequence"/>
</dbReference>
<dbReference type="GO" id="GO:0000287">
    <property type="term" value="F:magnesium ion binding"/>
    <property type="evidence" value="ECO:0007669"/>
    <property type="project" value="InterPro"/>
</dbReference>
<dbReference type="GO" id="GO:0010333">
    <property type="term" value="F:terpene synthase activity"/>
    <property type="evidence" value="ECO:0007669"/>
    <property type="project" value="InterPro"/>
</dbReference>
<dbReference type="GO" id="GO:0016102">
    <property type="term" value="P:diterpenoid biosynthetic process"/>
    <property type="evidence" value="ECO:0007669"/>
    <property type="project" value="InterPro"/>
</dbReference>
<dbReference type="GO" id="GO:0120251">
    <property type="term" value="P:hydrocarbon biosynthetic process"/>
    <property type="evidence" value="ECO:0007669"/>
    <property type="project" value="UniProtKB-ARBA"/>
</dbReference>
<dbReference type="CDD" id="cd00684">
    <property type="entry name" value="Terpene_cyclase_plant_C1"/>
    <property type="match status" value="1"/>
</dbReference>
<dbReference type="FunFam" id="1.10.600.10:FF:000007">
    <property type="entry name" value="Isoprene synthase, chloroplastic"/>
    <property type="match status" value="1"/>
</dbReference>
<dbReference type="Gene3D" id="1.10.600.10">
    <property type="entry name" value="Farnesyl Diphosphate Synthase"/>
    <property type="match status" value="1"/>
</dbReference>
<dbReference type="Gene3D" id="1.50.10.130">
    <property type="entry name" value="Terpene synthase, N-terminal domain"/>
    <property type="match status" value="1"/>
</dbReference>
<dbReference type="InterPro" id="IPR008949">
    <property type="entry name" value="Isoprenoid_synthase_dom_sf"/>
</dbReference>
<dbReference type="InterPro" id="IPR034741">
    <property type="entry name" value="Terpene_cyclase-like_1_C"/>
</dbReference>
<dbReference type="InterPro" id="IPR044814">
    <property type="entry name" value="Terpene_cyclase_plant_C1"/>
</dbReference>
<dbReference type="InterPro" id="IPR001906">
    <property type="entry name" value="Terpene_synth_N"/>
</dbReference>
<dbReference type="InterPro" id="IPR036965">
    <property type="entry name" value="Terpene_synth_N_sf"/>
</dbReference>
<dbReference type="InterPro" id="IPR050148">
    <property type="entry name" value="Terpene_synthase-like"/>
</dbReference>
<dbReference type="InterPro" id="IPR005630">
    <property type="entry name" value="Terpene_synthase_metal-bd"/>
</dbReference>
<dbReference type="InterPro" id="IPR008930">
    <property type="entry name" value="Terpenoid_cyclase/PrenylTrfase"/>
</dbReference>
<dbReference type="PANTHER" id="PTHR31225">
    <property type="entry name" value="OS04G0344100 PROTEIN-RELATED"/>
    <property type="match status" value="1"/>
</dbReference>
<dbReference type="PANTHER" id="PTHR31225:SF252">
    <property type="entry name" value="TERPENE SYNTHASE 12-RELATED"/>
    <property type="match status" value="1"/>
</dbReference>
<dbReference type="Pfam" id="PF01397">
    <property type="entry name" value="Terpene_synth"/>
    <property type="match status" value="1"/>
</dbReference>
<dbReference type="Pfam" id="PF03936">
    <property type="entry name" value="Terpene_synth_C"/>
    <property type="match status" value="1"/>
</dbReference>
<dbReference type="SFLD" id="SFLDS00005">
    <property type="entry name" value="Isoprenoid_Synthase_Type_I"/>
    <property type="match status" value="1"/>
</dbReference>
<dbReference type="SFLD" id="SFLDG01019">
    <property type="entry name" value="Terpene_Cyclase_Like_1_C_Termi"/>
    <property type="match status" value="1"/>
</dbReference>
<dbReference type="SUPFAM" id="SSF48239">
    <property type="entry name" value="Terpenoid cyclases/Protein prenyltransferases"/>
    <property type="match status" value="1"/>
</dbReference>
<dbReference type="SUPFAM" id="SSF48576">
    <property type="entry name" value="Terpenoid synthases"/>
    <property type="match status" value="1"/>
</dbReference>
<accession>B9T825</accession>
<reference key="1">
    <citation type="journal article" date="2010" name="Nat. Biotechnol.">
        <title>Draft genome sequence of the oilseed species Ricinus communis.</title>
        <authorList>
            <person name="Chan A.P."/>
            <person name="Crabtree J."/>
            <person name="Zhao Q."/>
            <person name="Lorenzi H."/>
            <person name="Orvis J."/>
            <person name="Puiu D."/>
            <person name="Melake-Berhan A."/>
            <person name="Jones K.M."/>
            <person name="Redman J."/>
            <person name="Chen G."/>
            <person name="Cahoon E.B."/>
            <person name="Gedil M."/>
            <person name="Stanke M."/>
            <person name="Haas B.J."/>
            <person name="Wortman J.R."/>
            <person name="Fraser-Liggett C.M."/>
            <person name="Ravel J."/>
            <person name="Rabinowicz P.D."/>
        </authorList>
    </citation>
    <scope>NUCLEOTIDE SEQUENCE [LARGE SCALE GENOMIC DNA]</scope>
    <source>
        <strain>cv. Hale</strain>
    </source>
</reference>
<reference key="2">
    <citation type="journal article" date="2012" name="Phytochemistry">
        <title>Functional characterization of four sesquiterpene synthases from Ricinus communis (castor bean).</title>
        <authorList>
            <person name="Xie X."/>
            <person name="Kirby J."/>
            <person name="Keasling J.D."/>
        </authorList>
    </citation>
    <scope>GENE NAME</scope>
</reference>
<organism>
    <name type="scientific">Ricinus communis</name>
    <name type="common">Castor bean</name>
    <dbReference type="NCBI Taxonomy" id="3988"/>
    <lineage>
        <taxon>Eukaryota</taxon>
        <taxon>Viridiplantae</taxon>
        <taxon>Streptophyta</taxon>
        <taxon>Embryophyta</taxon>
        <taxon>Tracheophyta</taxon>
        <taxon>Spermatophyta</taxon>
        <taxon>Magnoliopsida</taxon>
        <taxon>eudicotyledons</taxon>
        <taxon>Gunneridae</taxon>
        <taxon>Pentapetalae</taxon>
        <taxon>rosids</taxon>
        <taxon>fabids</taxon>
        <taxon>Malpighiales</taxon>
        <taxon>Euphorbiaceae</taxon>
        <taxon>Acalyphoideae</taxon>
        <taxon>Acalypheae</taxon>
        <taxon>Ricinus</taxon>
    </lineage>
</organism>
<protein>
    <recommendedName>
        <fullName>Probable terpene synthase 12</fullName>
        <shortName>RcSeTPS12</shortName>
        <ecNumber>4.2.3.-</ecNumber>
    </recommendedName>
</protein>